<feature type="chain" id="PRO_1000058005" description="Phosphoglycerate kinase">
    <location>
        <begin position="1"/>
        <end position="396"/>
    </location>
</feature>
<feature type="binding site" evidence="1">
    <location>
        <begin position="21"/>
        <end position="23"/>
    </location>
    <ligand>
        <name>substrate</name>
    </ligand>
</feature>
<feature type="binding site" evidence="1">
    <location>
        <position position="36"/>
    </location>
    <ligand>
        <name>substrate</name>
    </ligand>
</feature>
<feature type="binding site" evidence="1">
    <location>
        <begin position="59"/>
        <end position="62"/>
    </location>
    <ligand>
        <name>substrate</name>
    </ligand>
</feature>
<feature type="binding site" evidence="1">
    <location>
        <position position="113"/>
    </location>
    <ligand>
        <name>substrate</name>
    </ligand>
</feature>
<feature type="binding site" evidence="1">
    <location>
        <position position="146"/>
    </location>
    <ligand>
        <name>substrate</name>
    </ligand>
</feature>
<feature type="binding site" evidence="1">
    <location>
        <position position="197"/>
    </location>
    <ligand>
        <name>ATP</name>
        <dbReference type="ChEBI" id="CHEBI:30616"/>
    </ligand>
</feature>
<feature type="binding site" evidence="1">
    <location>
        <position position="319"/>
    </location>
    <ligand>
        <name>ATP</name>
        <dbReference type="ChEBI" id="CHEBI:30616"/>
    </ligand>
</feature>
<feature type="binding site" evidence="1">
    <location>
        <begin position="345"/>
        <end position="348"/>
    </location>
    <ligand>
        <name>ATP</name>
        <dbReference type="ChEBI" id="CHEBI:30616"/>
    </ligand>
</feature>
<gene>
    <name evidence="1" type="primary">pgk</name>
    <name type="ordered locus">lpp0152</name>
</gene>
<sequence>MNLIKMSDIDLSGKRVLIREDLNVPIKDGMITSDQRLQAALPTIKSALDNGAAVIVLSHLGRPEEGKYEKKFSLEPVADYLRKNLEYPVRFVKDYLSGVDVKPGELVVCENVRFNPGEKANDEALAKKLANLCDVFVMDAFGTAHRAQASTYGVAQYAPVAVAGPLLIRELEALNQVLKAPKKPIVAIVGGAKVSSKLSLLKQLVGMVDVLIPGGGIANTFLKAQGFEIGISLYEPDLLDEARHILILAKEKGCQIPLPTDVVVGKTFSETCPAFNKSLSNVAEDDMILDIGPETIRDYVDLIHEANTIIWNGPVGVFEFPQFAYGTRAIAIAIAESDAFSIAGGGDTLAAVDLYDLNQQISYISTGGGAFLECLEGKTLPAVAILQERAKHVKTN</sequence>
<reference key="1">
    <citation type="journal article" date="2004" name="Nat. Genet.">
        <title>Evidence in the Legionella pneumophila genome for exploitation of host cell functions and high genome plasticity.</title>
        <authorList>
            <person name="Cazalet C."/>
            <person name="Rusniok C."/>
            <person name="Brueggemann H."/>
            <person name="Zidane N."/>
            <person name="Magnier A."/>
            <person name="Ma L."/>
            <person name="Tichit M."/>
            <person name="Jarraud S."/>
            <person name="Bouchier C."/>
            <person name="Vandenesch F."/>
            <person name="Kunst F."/>
            <person name="Etienne J."/>
            <person name="Glaser P."/>
            <person name="Buchrieser C."/>
        </authorList>
    </citation>
    <scope>NUCLEOTIDE SEQUENCE [LARGE SCALE GENOMIC DNA]</scope>
    <source>
        <strain>Paris</strain>
    </source>
</reference>
<evidence type="ECO:0000255" key="1">
    <source>
        <dbReference type="HAMAP-Rule" id="MF_00145"/>
    </source>
</evidence>
<accession>Q5X8U1</accession>
<keyword id="KW-0067">ATP-binding</keyword>
<keyword id="KW-0963">Cytoplasm</keyword>
<keyword id="KW-0324">Glycolysis</keyword>
<keyword id="KW-0418">Kinase</keyword>
<keyword id="KW-0547">Nucleotide-binding</keyword>
<keyword id="KW-0808">Transferase</keyword>
<comment type="catalytic activity">
    <reaction evidence="1">
        <text>(2R)-3-phosphoglycerate + ATP = (2R)-3-phospho-glyceroyl phosphate + ADP</text>
        <dbReference type="Rhea" id="RHEA:14801"/>
        <dbReference type="ChEBI" id="CHEBI:30616"/>
        <dbReference type="ChEBI" id="CHEBI:57604"/>
        <dbReference type="ChEBI" id="CHEBI:58272"/>
        <dbReference type="ChEBI" id="CHEBI:456216"/>
        <dbReference type="EC" id="2.7.2.3"/>
    </reaction>
</comment>
<comment type="pathway">
    <text evidence="1">Carbohydrate degradation; glycolysis; pyruvate from D-glyceraldehyde 3-phosphate: step 2/5.</text>
</comment>
<comment type="subunit">
    <text evidence="1">Monomer.</text>
</comment>
<comment type="subcellular location">
    <subcellularLocation>
        <location evidence="1">Cytoplasm</location>
    </subcellularLocation>
</comment>
<comment type="similarity">
    <text evidence="1">Belongs to the phosphoglycerate kinase family.</text>
</comment>
<protein>
    <recommendedName>
        <fullName evidence="1">Phosphoglycerate kinase</fullName>
        <ecNumber evidence="1">2.7.2.3</ecNumber>
    </recommendedName>
</protein>
<dbReference type="EC" id="2.7.2.3" evidence="1"/>
<dbReference type="EMBL" id="CR628336">
    <property type="protein sequence ID" value="CAH11300.1"/>
    <property type="molecule type" value="Genomic_DNA"/>
</dbReference>
<dbReference type="RefSeq" id="WP_011212787.1">
    <property type="nucleotide sequence ID" value="NC_006368.1"/>
</dbReference>
<dbReference type="SMR" id="Q5X8U1"/>
<dbReference type="KEGG" id="lpp:lpp0152"/>
<dbReference type="LegioList" id="lpp0152"/>
<dbReference type="HOGENOM" id="CLU_025427_0_2_6"/>
<dbReference type="UniPathway" id="UPA00109">
    <property type="reaction ID" value="UER00185"/>
</dbReference>
<dbReference type="GO" id="GO:0005829">
    <property type="term" value="C:cytosol"/>
    <property type="evidence" value="ECO:0007669"/>
    <property type="project" value="TreeGrafter"/>
</dbReference>
<dbReference type="GO" id="GO:0043531">
    <property type="term" value="F:ADP binding"/>
    <property type="evidence" value="ECO:0007669"/>
    <property type="project" value="TreeGrafter"/>
</dbReference>
<dbReference type="GO" id="GO:0005524">
    <property type="term" value="F:ATP binding"/>
    <property type="evidence" value="ECO:0007669"/>
    <property type="project" value="UniProtKB-KW"/>
</dbReference>
<dbReference type="GO" id="GO:0004618">
    <property type="term" value="F:phosphoglycerate kinase activity"/>
    <property type="evidence" value="ECO:0007669"/>
    <property type="project" value="UniProtKB-UniRule"/>
</dbReference>
<dbReference type="GO" id="GO:0006094">
    <property type="term" value="P:gluconeogenesis"/>
    <property type="evidence" value="ECO:0007669"/>
    <property type="project" value="TreeGrafter"/>
</dbReference>
<dbReference type="GO" id="GO:0006096">
    <property type="term" value="P:glycolytic process"/>
    <property type="evidence" value="ECO:0007669"/>
    <property type="project" value="UniProtKB-UniRule"/>
</dbReference>
<dbReference type="FunFam" id="3.40.50.1260:FF:000001">
    <property type="entry name" value="Phosphoglycerate kinase"/>
    <property type="match status" value="1"/>
</dbReference>
<dbReference type="FunFam" id="3.40.50.1260:FF:000002">
    <property type="entry name" value="Phosphoglycerate kinase"/>
    <property type="match status" value="1"/>
</dbReference>
<dbReference type="Gene3D" id="3.40.50.1260">
    <property type="entry name" value="Phosphoglycerate kinase, N-terminal domain"/>
    <property type="match status" value="2"/>
</dbReference>
<dbReference type="HAMAP" id="MF_00145">
    <property type="entry name" value="Phosphoglyc_kinase"/>
    <property type="match status" value="1"/>
</dbReference>
<dbReference type="InterPro" id="IPR001576">
    <property type="entry name" value="Phosphoglycerate_kinase"/>
</dbReference>
<dbReference type="InterPro" id="IPR015911">
    <property type="entry name" value="Phosphoglycerate_kinase_CS"/>
</dbReference>
<dbReference type="InterPro" id="IPR015824">
    <property type="entry name" value="Phosphoglycerate_kinase_N"/>
</dbReference>
<dbReference type="InterPro" id="IPR036043">
    <property type="entry name" value="Phosphoglycerate_kinase_sf"/>
</dbReference>
<dbReference type="PANTHER" id="PTHR11406">
    <property type="entry name" value="PHOSPHOGLYCERATE KINASE"/>
    <property type="match status" value="1"/>
</dbReference>
<dbReference type="PANTHER" id="PTHR11406:SF23">
    <property type="entry name" value="PHOSPHOGLYCERATE KINASE 1, CHLOROPLASTIC-RELATED"/>
    <property type="match status" value="1"/>
</dbReference>
<dbReference type="Pfam" id="PF00162">
    <property type="entry name" value="PGK"/>
    <property type="match status" value="1"/>
</dbReference>
<dbReference type="PIRSF" id="PIRSF000724">
    <property type="entry name" value="Pgk"/>
    <property type="match status" value="1"/>
</dbReference>
<dbReference type="PRINTS" id="PR00477">
    <property type="entry name" value="PHGLYCKINASE"/>
</dbReference>
<dbReference type="SUPFAM" id="SSF53748">
    <property type="entry name" value="Phosphoglycerate kinase"/>
    <property type="match status" value="1"/>
</dbReference>
<dbReference type="PROSITE" id="PS00111">
    <property type="entry name" value="PGLYCERATE_KINASE"/>
    <property type="match status" value="1"/>
</dbReference>
<organism>
    <name type="scientific">Legionella pneumophila (strain Paris)</name>
    <dbReference type="NCBI Taxonomy" id="297246"/>
    <lineage>
        <taxon>Bacteria</taxon>
        <taxon>Pseudomonadati</taxon>
        <taxon>Pseudomonadota</taxon>
        <taxon>Gammaproteobacteria</taxon>
        <taxon>Legionellales</taxon>
        <taxon>Legionellaceae</taxon>
        <taxon>Legionella</taxon>
    </lineage>
</organism>
<name>PGK_LEGPA</name>
<proteinExistence type="inferred from homology"/>